<feature type="chain" id="PRO_0000074788" description="Sensor protein LytS">
    <location>
        <begin position="1"/>
        <end position="589"/>
    </location>
</feature>
<feature type="transmembrane region" description="Helical" evidence="1">
    <location>
        <begin position="4"/>
        <end position="25"/>
    </location>
</feature>
<feature type="transmembrane region" description="Helical" evidence="1">
    <location>
        <begin position="45"/>
        <end position="67"/>
    </location>
</feature>
<feature type="transmembrane region" description="Helical" evidence="1">
    <location>
        <begin position="87"/>
        <end position="109"/>
    </location>
</feature>
<feature type="transmembrane region" description="Helical" evidence="1">
    <location>
        <begin position="116"/>
        <end position="138"/>
    </location>
</feature>
<feature type="transmembrane region" description="Helical" evidence="1">
    <location>
        <begin position="153"/>
        <end position="172"/>
    </location>
</feature>
<feature type="transmembrane region" description="Helical" evidence="1">
    <location>
        <begin position="184"/>
        <end position="206"/>
    </location>
</feature>
<feature type="domain" description="GAF">
    <location>
        <begin position="235"/>
        <end position="360"/>
    </location>
</feature>
<feature type="domain" description="Histidine kinase" evidence="2">
    <location>
        <begin position="360"/>
        <end position="577"/>
    </location>
</feature>
<feature type="modified residue" description="Phosphohistidine; by autocatalysis" evidence="2">
    <location>
        <position position="387"/>
    </location>
</feature>
<evidence type="ECO:0000255" key="1"/>
<evidence type="ECO:0000255" key="2">
    <source>
        <dbReference type="PROSITE-ProRule" id="PRU00107"/>
    </source>
</evidence>
<evidence type="ECO:0000305" key="3"/>
<keyword id="KW-0067">ATP-binding</keyword>
<keyword id="KW-1003">Cell membrane</keyword>
<keyword id="KW-0418">Kinase</keyword>
<keyword id="KW-0472">Membrane</keyword>
<keyword id="KW-0547">Nucleotide-binding</keyword>
<keyword id="KW-0597">Phosphoprotein</keyword>
<keyword id="KW-1185">Reference proteome</keyword>
<keyword id="KW-0808">Transferase</keyword>
<keyword id="KW-0812">Transmembrane</keyword>
<keyword id="KW-1133">Transmembrane helix</keyword>
<keyword id="KW-0902">Two-component regulatory system</keyword>
<dbReference type="EC" id="2.7.13.3"/>
<dbReference type="EMBL" id="AE016877">
    <property type="protein sequence ID" value="AAP12303.1"/>
    <property type="molecule type" value="Genomic_DNA"/>
</dbReference>
<dbReference type="RefSeq" id="NP_835102.1">
    <property type="nucleotide sequence ID" value="NC_004722.1"/>
</dbReference>
<dbReference type="RefSeq" id="WP_000933560.1">
    <property type="nucleotide sequence ID" value="NC_004722.1"/>
</dbReference>
<dbReference type="SMR" id="Q814J0"/>
<dbReference type="STRING" id="226900.BC_5441"/>
<dbReference type="KEGG" id="bce:BC5441"/>
<dbReference type="PATRIC" id="fig|226900.8.peg.5621"/>
<dbReference type="HOGENOM" id="CLU_020473_3_3_9"/>
<dbReference type="Proteomes" id="UP000001417">
    <property type="component" value="Chromosome"/>
</dbReference>
<dbReference type="GO" id="GO:0005886">
    <property type="term" value="C:plasma membrane"/>
    <property type="evidence" value="ECO:0000318"/>
    <property type="project" value="GO_Central"/>
</dbReference>
<dbReference type="GO" id="GO:0005524">
    <property type="term" value="F:ATP binding"/>
    <property type="evidence" value="ECO:0007669"/>
    <property type="project" value="UniProtKB-KW"/>
</dbReference>
<dbReference type="GO" id="GO:0000155">
    <property type="term" value="F:phosphorelay sensor kinase activity"/>
    <property type="evidence" value="ECO:0000318"/>
    <property type="project" value="GO_Central"/>
</dbReference>
<dbReference type="GO" id="GO:0071555">
    <property type="term" value="P:cell wall organization"/>
    <property type="evidence" value="ECO:0007669"/>
    <property type="project" value="InterPro"/>
</dbReference>
<dbReference type="GO" id="GO:0007165">
    <property type="term" value="P:signal transduction"/>
    <property type="evidence" value="ECO:0000318"/>
    <property type="project" value="GO_Central"/>
</dbReference>
<dbReference type="CDD" id="cd16957">
    <property type="entry name" value="HATPase_LytS-like"/>
    <property type="match status" value="1"/>
</dbReference>
<dbReference type="Gene3D" id="3.30.450.40">
    <property type="match status" value="1"/>
</dbReference>
<dbReference type="Gene3D" id="3.30.565.10">
    <property type="entry name" value="Histidine kinase-like ATPase, C-terminal domain"/>
    <property type="match status" value="1"/>
</dbReference>
<dbReference type="InterPro" id="IPR050640">
    <property type="entry name" value="Bact_2-comp_sensor_kinase"/>
</dbReference>
<dbReference type="InterPro" id="IPR003018">
    <property type="entry name" value="GAF"/>
</dbReference>
<dbReference type="InterPro" id="IPR029016">
    <property type="entry name" value="GAF-like_dom_sf"/>
</dbReference>
<dbReference type="InterPro" id="IPR036890">
    <property type="entry name" value="HATPase_C_sf"/>
</dbReference>
<dbReference type="InterPro" id="IPR005467">
    <property type="entry name" value="His_kinase_dom"/>
</dbReference>
<dbReference type="InterPro" id="IPR010559">
    <property type="entry name" value="Sig_transdc_His_kin_internal"/>
</dbReference>
<dbReference type="InterPro" id="IPR011620">
    <property type="entry name" value="Sig_transdc_His_kinase_LytS_TM"/>
</dbReference>
<dbReference type="PANTHER" id="PTHR34220">
    <property type="entry name" value="SENSOR HISTIDINE KINASE YPDA"/>
    <property type="match status" value="1"/>
</dbReference>
<dbReference type="PANTHER" id="PTHR34220:SF7">
    <property type="entry name" value="SENSOR HISTIDINE KINASE YPDA"/>
    <property type="match status" value="1"/>
</dbReference>
<dbReference type="Pfam" id="PF07694">
    <property type="entry name" value="5TM-5TMR_LYT"/>
    <property type="match status" value="1"/>
</dbReference>
<dbReference type="Pfam" id="PF01590">
    <property type="entry name" value="GAF"/>
    <property type="match status" value="1"/>
</dbReference>
<dbReference type="Pfam" id="PF02518">
    <property type="entry name" value="HATPase_c"/>
    <property type="match status" value="1"/>
</dbReference>
<dbReference type="Pfam" id="PF06580">
    <property type="entry name" value="His_kinase"/>
    <property type="match status" value="1"/>
</dbReference>
<dbReference type="SMART" id="SM00065">
    <property type="entry name" value="GAF"/>
    <property type="match status" value="1"/>
</dbReference>
<dbReference type="SMART" id="SM00387">
    <property type="entry name" value="HATPase_c"/>
    <property type="match status" value="1"/>
</dbReference>
<dbReference type="SUPFAM" id="SSF55874">
    <property type="entry name" value="ATPase domain of HSP90 chaperone/DNA topoisomerase II/histidine kinase"/>
    <property type="match status" value="1"/>
</dbReference>
<dbReference type="SUPFAM" id="SSF55781">
    <property type="entry name" value="GAF domain-like"/>
    <property type="match status" value="1"/>
</dbReference>
<dbReference type="PROSITE" id="PS50109">
    <property type="entry name" value="HIS_KIN"/>
    <property type="match status" value="1"/>
</dbReference>
<accession>Q814J0</accession>
<sequence length="589" mass="65319">MLNLVLMMIERVGLIVILGFLLSHIKTFRRLLHKQDGYVDKLKLICIFSVFTIVSNYTGIEIAGNTIMNENWLQGVSSSSTIANTRIMGVGISGLLGGPIVGIGVGSIAGIHRYMLGGTTALSCAISSILAGVITGYIGYIFKKYNRTITPKFSAILSVFIVSLEMIMILLIVEDGMSIVKTIAIPMILVNSFGSFILLSMIQAILRQEENAKALQTHKVLRIADKTLPYFRQGLTEESCKHVAQIIHRFPGTDAVSLTDTEKILAHVGLASDHHIPSHSLITGLSKEVLHTGQIMKAKSREVINCQHEGCPLQAAIVIPLTSHGNTIGTLKLYFKNPNQLSRVEEELAEGLAKIFSTQLELGEAELQSKLLQDAEIKALQAQINPHFLFNAINTVSALCRTDVEKARKLLLQLSVYFRCNLQGARQLLIPLEQELNHVQAYLSLEQARFPNKYEVKMYIEDELKTTLVPPFVLQLLVENALRHAFPKKQPVCEVEVHVFEKEGMVHFEVKDNGQGIEEERLEQLGKMVVSSKKGTGTALYNINERLIGLFGKETMLHIESELNEGTEITFVIPKKVGEEEQIVKSISS</sequence>
<reference key="1">
    <citation type="journal article" date="2003" name="Nature">
        <title>Genome sequence of Bacillus cereus and comparative analysis with Bacillus anthracis.</title>
        <authorList>
            <person name="Ivanova N."/>
            <person name="Sorokin A."/>
            <person name="Anderson I."/>
            <person name="Galleron N."/>
            <person name="Candelon B."/>
            <person name="Kapatral V."/>
            <person name="Bhattacharyya A."/>
            <person name="Reznik G."/>
            <person name="Mikhailova N."/>
            <person name="Lapidus A."/>
            <person name="Chu L."/>
            <person name="Mazur M."/>
            <person name="Goltsman E."/>
            <person name="Larsen N."/>
            <person name="D'Souza M."/>
            <person name="Walunas T."/>
            <person name="Grechkin Y."/>
            <person name="Pusch G."/>
            <person name="Haselkorn R."/>
            <person name="Fonstein M."/>
            <person name="Ehrlich S.D."/>
            <person name="Overbeek R."/>
            <person name="Kyrpides N.C."/>
        </authorList>
    </citation>
    <scope>NUCLEOTIDE SEQUENCE [LARGE SCALE GENOMIC DNA]</scope>
    <source>
        <strain>ATCC 14579 / DSM 31 / CCUG 7414 / JCM 2152 / NBRC 15305 / NCIMB 9373 / NCTC 2599 / NRRL B-3711</strain>
    </source>
</reference>
<protein>
    <recommendedName>
        <fullName>Sensor protein LytS</fullName>
        <ecNumber>2.7.13.3</ecNumber>
    </recommendedName>
</protein>
<gene>
    <name type="primary">lytS</name>
    <name type="ordered locus">BC_5441</name>
</gene>
<proteinExistence type="inferred from homology"/>
<comment type="function">
    <text>Member of the two-component regulatory system LytS/LytT that probably regulates genes involved in cell wall metabolism.</text>
</comment>
<comment type="catalytic activity">
    <reaction>
        <text>ATP + protein L-histidine = ADP + protein N-phospho-L-histidine.</text>
        <dbReference type="EC" id="2.7.13.3"/>
    </reaction>
</comment>
<comment type="subcellular location">
    <subcellularLocation>
        <location evidence="3">Cell membrane</location>
        <topology evidence="3">Multi-pass membrane protein</topology>
    </subcellularLocation>
</comment>
<name>LYTS_BACCR</name>
<organism>
    <name type="scientific">Bacillus cereus (strain ATCC 14579 / DSM 31 / CCUG 7414 / JCM 2152 / NBRC 15305 / NCIMB 9373 / NCTC 2599 / NRRL B-3711)</name>
    <dbReference type="NCBI Taxonomy" id="226900"/>
    <lineage>
        <taxon>Bacteria</taxon>
        <taxon>Bacillati</taxon>
        <taxon>Bacillota</taxon>
        <taxon>Bacilli</taxon>
        <taxon>Bacillales</taxon>
        <taxon>Bacillaceae</taxon>
        <taxon>Bacillus</taxon>
        <taxon>Bacillus cereus group</taxon>
    </lineage>
</organism>